<protein>
    <recommendedName>
        <fullName evidence="1">Ferredoxin--NADP reductase 1</fullName>
        <shortName evidence="1">FNR 1</shortName>
        <shortName evidence="1">Fd-NADP(+) reductase 1</shortName>
        <ecNumber evidence="1">1.18.1.2</ecNumber>
    </recommendedName>
</protein>
<gene>
    <name type="ordered locus">GFO_0125</name>
</gene>
<sequence>MIKTDILIIGAGPTGLFAVFEAGLLKLKCHLIDALPQPGGQCSEIYPKKPIYDIPGFPEVLAGDLVDNLMEQIKPFEPGFTLGERAETIDKQEDGSFIVTTSQGAKHHAPVVVIAGGLGSFEPRKPPIPSIKEYENKGVAYIIRDPEVYRDKKVVIAGGGDSALDWSIFLADVASEVSLVHRRKDFRGALDSVEKVEELSKIGKINLITDAEVVDLKGENELDSVLIRHRDQARGEELKDTDHFIPLFGLSPKLGPIANWGLEIEKNAIKVDNAYDYQTNIPGIYAIGDVNTYKGKLKLILCGFHEAAIMCQSAYQRINPDKKYVMKYTTVSGVSGFDGSKKEAKKEVVKSIN</sequence>
<reference key="1">
    <citation type="journal article" date="2006" name="Environ. Microbiol.">
        <title>Whole genome analysis of the marine Bacteroidetes'Gramella forsetii' reveals adaptations to degradation of polymeric organic matter.</title>
        <authorList>
            <person name="Bauer M."/>
            <person name="Kube M."/>
            <person name="Teeling H."/>
            <person name="Richter M."/>
            <person name="Lombardot T."/>
            <person name="Allers E."/>
            <person name="Wuerdemann C.A."/>
            <person name="Quast C."/>
            <person name="Kuhl H."/>
            <person name="Knaust F."/>
            <person name="Woebken D."/>
            <person name="Bischof K."/>
            <person name="Mussmann M."/>
            <person name="Choudhuri J.V."/>
            <person name="Meyer F."/>
            <person name="Reinhardt R."/>
            <person name="Amann R.I."/>
            <person name="Gloeckner F.O."/>
        </authorList>
    </citation>
    <scope>NUCLEOTIDE SEQUENCE [LARGE SCALE GENOMIC DNA]</scope>
    <source>
        <strain>DSM 17595 / CGMCC 1.15422 / KT0803</strain>
    </source>
</reference>
<proteinExistence type="inferred from homology"/>
<name>FENR1_CHRFK</name>
<feature type="chain" id="PRO_0000364844" description="Ferredoxin--NADP reductase 1">
    <location>
        <begin position="1"/>
        <end position="353"/>
    </location>
</feature>
<feature type="binding site" evidence="1">
    <location>
        <position position="14"/>
    </location>
    <ligand>
        <name>FAD</name>
        <dbReference type="ChEBI" id="CHEBI:57692"/>
    </ligand>
</feature>
<feature type="binding site" evidence="1">
    <location>
        <position position="33"/>
    </location>
    <ligand>
        <name>FAD</name>
        <dbReference type="ChEBI" id="CHEBI:57692"/>
    </ligand>
</feature>
<feature type="binding site" evidence="1">
    <location>
        <position position="41"/>
    </location>
    <ligand>
        <name>FAD</name>
        <dbReference type="ChEBI" id="CHEBI:57692"/>
    </ligand>
</feature>
<feature type="binding site" evidence="1">
    <location>
        <position position="46"/>
    </location>
    <ligand>
        <name>FAD</name>
        <dbReference type="ChEBI" id="CHEBI:57692"/>
    </ligand>
</feature>
<feature type="binding site" evidence="1">
    <location>
        <position position="86"/>
    </location>
    <ligand>
        <name>FAD</name>
        <dbReference type="ChEBI" id="CHEBI:57692"/>
    </ligand>
</feature>
<feature type="binding site" evidence="1">
    <location>
        <position position="121"/>
    </location>
    <ligand>
        <name>FAD</name>
        <dbReference type="ChEBI" id="CHEBI:57692"/>
    </ligand>
</feature>
<feature type="binding site" evidence="1">
    <location>
        <position position="289"/>
    </location>
    <ligand>
        <name>FAD</name>
        <dbReference type="ChEBI" id="CHEBI:57692"/>
    </ligand>
</feature>
<feature type="binding site" evidence="1">
    <location>
        <position position="330"/>
    </location>
    <ligand>
        <name>FAD</name>
        <dbReference type="ChEBI" id="CHEBI:57692"/>
    </ligand>
</feature>
<comment type="catalytic activity">
    <reaction evidence="1">
        <text>2 reduced [2Fe-2S]-[ferredoxin] + NADP(+) + H(+) = 2 oxidized [2Fe-2S]-[ferredoxin] + NADPH</text>
        <dbReference type="Rhea" id="RHEA:20125"/>
        <dbReference type="Rhea" id="RHEA-COMP:10000"/>
        <dbReference type="Rhea" id="RHEA-COMP:10001"/>
        <dbReference type="ChEBI" id="CHEBI:15378"/>
        <dbReference type="ChEBI" id="CHEBI:33737"/>
        <dbReference type="ChEBI" id="CHEBI:33738"/>
        <dbReference type="ChEBI" id="CHEBI:57783"/>
        <dbReference type="ChEBI" id="CHEBI:58349"/>
        <dbReference type="EC" id="1.18.1.2"/>
    </reaction>
</comment>
<comment type="cofactor">
    <cofactor evidence="1">
        <name>FAD</name>
        <dbReference type="ChEBI" id="CHEBI:57692"/>
    </cofactor>
    <text evidence="1">Binds 1 FAD per subunit.</text>
</comment>
<comment type="subunit">
    <text evidence="1">Homodimer.</text>
</comment>
<comment type="similarity">
    <text evidence="1">Belongs to the ferredoxin--NADP reductase type 2 family.</text>
</comment>
<evidence type="ECO:0000255" key="1">
    <source>
        <dbReference type="HAMAP-Rule" id="MF_01685"/>
    </source>
</evidence>
<accession>A0LXL9</accession>
<organism>
    <name type="scientific">Christiangramia forsetii (strain DSM 17595 / CGMCC 1.15422 / KT0803)</name>
    <name type="common">Gramella forsetii</name>
    <dbReference type="NCBI Taxonomy" id="411154"/>
    <lineage>
        <taxon>Bacteria</taxon>
        <taxon>Pseudomonadati</taxon>
        <taxon>Bacteroidota</taxon>
        <taxon>Flavobacteriia</taxon>
        <taxon>Flavobacteriales</taxon>
        <taxon>Flavobacteriaceae</taxon>
        <taxon>Christiangramia</taxon>
    </lineage>
</organism>
<dbReference type="EC" id="1.18.1.2" evidence="1"/>
<dbReference type="EMBL" id="CU207366">
    <property type="protein sequence ID" value="CAL65114.1"/>
    <property type="molecule type" value="Genomic_DNA"/>
</dbReference>
<dbReference type="RefSeq" id="WP_011708052.1">
    <property type="nucleotide sequence ID" value="NC_008571.1"/>
</dbReference>
<dbReference type="SMR" id="A0LXL9"/>
<dbReference type="STRING" id="411154.GFO_0125"/>
<dbReference type="KEGG" id="gfo:GFO_0125"/>
<dbReference type="eggNOG" id="COG0492">
    <property type="taxonomic scope" value="Bacteria"/>
</dbReference>
<dbReference type="HOGENOM" id="CLU_031864_5_5_10"/>
<dbReference type="OrthoDB" id="9806179at2"/>
<dbReference type="Proteomes" id="UP000000755">
    <property type="component" value="Chromosome"/>
</dbReference>
<dbReference type="GO" id="GO:0004324">
    <property type="term" value="F:ferredoxin-NADP+ reductase activity"/>
    <property type="evidence" value="ECO:0007669"/>
    <property type="project" value="UniProtKB-UniRule"/>
</dbReference>
<dbReference type="GO" id="GO:0050660">
    <property type="term" value="F:flavin adenine dinucleotide binding"/>
    <property type="evidence" value="ECO:0007669"/>
    <property type="project" value="UniProtKB-UniRule"/>
</dbReference>
<dbReference type="GO" id="GO:0050661">
    <property type="term" value="F:NADP binding"/>
    <property type="evidence" value="ECO:0007669"/>
    <property type="project" value="UniProtKB-UniRule"/>
</dbReference>
<dbReference type="Gene3D" id="3.50.50.60">
    <property type="entry name" value="FAD/NAD(P)-binding domain"/>
    <property type="match status" value="2"/>
</dbReference>
<dbReference type="HAMAP" id="MF_01685">
    <property type="entry name" value="FENR2"/>
    <property type="match status" value="1"/>
</dbReference>
<dbReference type="InterPro" id="IPR036188">
    <property type="entry name" value="FAD/NAD-bd_sf"/>
</dbReference>
<dbReference type="InterPro" id="IPR023753">
    <property type="entry name" value="FAD/NAD-binding_dom"/>
</dbReference>
<dbReference type="InterPro" id="IPR022890">
    <property type="entry name" value="Fd--NADP_Rdtase_type_2"/>
</dbReference>
<dbReference type="InterPro" id="IPR050097">
    <property type="entry name" value="Ferredoxin-NADP_redctase_2"/>
</dbReference>
<dbReference type="PANTHER" id="PTHR48105">
    <property type="entry name" value="THIOREDOXIN REDUCTASE 1-RELATED-RELATED"/>
    <property type="match status" value="1"/>
</dbReference>
<dbReference type="Pfam" id="PF07992">
    <property type="entry name" value="Pyr_redox_2"/>
    <property type="match status" value="1"/>
</dbReference>
<dbReference type="PRINTS" id="PR00368">
    <property type="entry name" value="FADPNR"/>
</dbReference>
<dbReference type="PRINTS" id="PR00469">
    <property type="entry name" value="PNDRDTASEII"/>
</dbReference>
<dbReference type="SUPFAM" id="SSF51905">
    <property type="entry name" value="FAD/NAD(P)-binding domain"/>
    <property type="match status" value="2"/>
</dbReference>
<keyword id="KW-0274">FAD</keyword>
<keyword id="KW-0285">Flavoprotein</keyword>
<keyword id="KW-0521">NADP</keyword>
<keyword id="KW-0560">Oxidoreductase</keyword>